<keyword id="KW-0255">Endonuclease</keyword>
<keyword id="KW-0378">Hydrolase</keyword>
<keyword id="KW-0442">Lipid degradation</keyword>
<keyword id="KW-0443">Lipid metabolism</keyword>
<keyword id="KW-0469">Meiosis</keyword>
<keyword id="KW-0472">Membrane</keyword>
<keyword id="KW-0479">Metal-binding</keyword>
<keyword id="KW-0496">Mitochondrion</keyword>
<keyword id="KW-1000">Mitochondrion outer membrane</keyword>
<keyword id="KW-0540">Nuclease</keyword>
<keyword id="KW-0812">Transmembrane</keyword>
<keyword id="KW-1133">Transmembrane helix</keyword>
<comment type="function">
    <text evidence="1">Plays a critical role in PIWI-interacting RNA (piRNA) biogenesis (By similarity). piRNAs provide essential protection against the activity of mobile genetic elements. piRNA-mediated transposon silencing is thus critical for maintaining genome stability. Backbone-non-specific, single strand-specific nuclease, cleaving either RNA or DNA substrates with similar affinity (By similarity). Produces 5' phosphate and 3' hydroxyl termini, suggesting it could directly participate in the processing of primary piRNA transcripts (By similarity). Has been proposed to act as a cardiolipin hydrolase to generate phosphatidic acid at mitochondrial surface. Although it cannot be excluded that it can act as a phospholipase in some circumstances, this activity could not be confirmed (By similarity).</text>
</comment>
<comment type="subunit">
    <text evidence="1">Homodimer.</text>
</comment>
<comment type="subcellular location">
    <subcellularLocation>
        <location evidence="1">Mitochondrion outer membrane</location>
        <topology evidence="1">Single-pass membrane protein</topology>
    </subcellularLocation>
</comment>
<comment type="domain">
    <text evidence="1">In contrast to other members of the phospholipase D family, contains only one PLD phosphodiesterase domain, suggesting that it has a single half-catalytic and requires homodimerization to form a complete active site.</text>
</comment>
<comment type="similarity">
    <text evidence="4">Belongs to the phospholipase D family. MitoPLD/Zucchini subfamily.</text>
</comment>
<feature type="chain" id="PRO_0000408334" description="Mitochondrial cardiolipin hydrolase">
    <location>
        <begin position="1"/>
        <end position="223"/>
    </location>
</feature>
<feature type="topological domain" description="Mitochondrial intermembrane" evidence="2">
    <location>
        <begin position="1"/>
        <end position="6"/>
    </location>
</feature>
<feature type="transmembrane region" description="Helical" evidence="2">
    <location>
        <begin position="7"/>
        <end position="24"/>
    </location>
</feature>
<feature type="topological domain" description="Cytoplasmic" evidence="2">
    <location>
        <begin position="25"/>
        <end position="223"/>
    </location>
</feature>
<feature type="domain" description="PLD phosphodiesterase" evidence="3">
    <location>
        <begin position="164"/>
        <end position="191"/>
    </location>
</feature>
<feature type="active site" evidence="3">
    <location>
        <position position="169"/>
    </location>
</feature>
<feature type="active site" evidence="3">
    <location>
        <position position="171"/>
    </location>
</feature>
<feature type="active site" evidence="3">
    <location>
        <position position="176"/>
    </location>
</feature>
<dbReference type="EC" id="3.1.-.-"/>
<dbReference type="EMBL" id="DS496125">
    <property type="protein sequence ID" value="EDP03649.1"/>
    <property type="molecule type" value="Genomic_DNA"/>
</dbReference>
<dbReference type="RefSeq" id="XP_001693080.1">
    <property type="nucleotide sequence ID" value="XM_001693028.1"/>
</dbReference>
<dbReference type="SMR" id="A8IW99"/>
<dbReference type="PaxDb" id="3055-EDP03649"/>
<dbReference type="EnsemblPlants" id="PNW74265">
    <property type="protein sequence ID" value="PNW74265"/>
    <property type="gene ID" value="CHLRE_13g591900v5"/>
</dbReference>
<dbReference type="GeneID" id="5718656"/>
<dbReference type="Gramene" id="PNW74265">
    <property type="protein sequence ID" value="PNW74265"/>
    <property type="gene ID" value="CHLRE_13g591900v5"/>
</dbReference>
<dbReference type="KEGG" id="cre:CHLRE_13g591900v5"/>
<dbReference type="eggNOG" id="ENOG502RXG9">
    <property type="taxonomic scope" value="Eukaryota"/>
</dbReference>
<dbReference type="HOGENOM" id="CLU_080814_0_1_1"/>
<dbReference type="OMA" id="RIWEEFD"/>
<dbReference type="OrthoDB" id="5205528at2759"/>
<dbReference type="GO" id="GO:0005741">
    <property type="term" value="C:mitochondrial outer membrane"/>
    <property type="evidence" value="ECO:0007669"/>
    <property type="project" value="UniProtKB-SubCell"/>
</dbReference>
<dbReference type="GO" id="GO:0004519">
    <property type="term" value="F:endonuclease activity"/>
    <property type="evidence" value="ECO:0007669"/>
    <property type="project" value="UniProtKB-KW"/>
</dbReference>
<dbReference type="GO" id="GO:0046872">
    <property type="term" value="F:metal ion binding"/>
    <property type="evidence" value="ECO:0007669"/>
    <property type="project" value="UniProtKB-KW"/>
</dbReference>
<dbReference type="GO" id="GO:0016042">
    <property type="term" value="P:lipid catabolic process"/>
    <property type="evidence" value="ECO:0007669"/>
    <property type="project" value="UniProtKB-KW"/>
</dbReference>
<dbReference type="GO" id="GO:0051321">
    <property type="term" value="P:meiotic cell cycle"/>
    <property type="evidence" value="ECO:0007669"/>
    <property type="project" value="UniProtKB-KW"/>
</dbReference>
<dbReference type="CDD" id="cd09171">
    <property type="entry name" value="PLDc_vPLD6_like"/>
    <property type="match status" value="1"/>
</dbReference>
<dbReference type="Gene3D" id="3.30.870.10">
    <property type="entry name" value="Endonuclease Chain A"/>
    <property type="match status" value="1"/>
</dbReference>
<dbReference type="InterPro" id="IPR025202">
    <property type="entry name" value="PLD-like_dom"/>
</dbReference>
<dbReference type="InterPro" id="IPR051406">
    <property type="entry name" value="PLD_domain"/>
</dbReference>
<dbReference type="InterPro" id="IPR001736">
    <property type="entry name" value="PLipase_D/transphosphatidylase"/>
</dbReference>
<dbReference type="InterPro" id="IPR000571">
    <property type="entry name" value="Znf_CCCH"/>
</dbReference>
<dbReference type="PANTHER" id="PTHR43856">
    <property type="entry name" value="CARDIOLIPIN HYDROLASE"/>
    <property type="match status" value="1"/>
</dbReference>
<dbReference type="PANTHER" id="PTHR43856:SF1">
    <property type="entry name" value="MITOCHONDRIAL CARDIOLIPIN HYDROLASE"/>
    <property type="match status" value="1"/>
</dbReference>
<dbReference type="Pfam" id="PF13091">
    <property type="entry name" value="PLDc_2"/>
    <property type="match status" value="1"/>
</dbReference>
<dbReference type="SUPFAM" id="SSF56024">
    <property type="entry name" value="Phospholipase D/nuclease"/>
    <property type="match status" value="1"/>
</dbReference>
<dbReference type="PROSITE" id="PS50035">
    <property type="entry name" value="PLD"/>
    <property type="match status" value="1"/>
</dbReference>
<accession>A8IW99</accession>
<proteinExistence type="inferred from homology"/>
<gene>
    <name type="ORF">CHLREDRAFT_190403</name>
</gene>
<reference key="1">
    <citation type="journal article" date="2007" name="Science">
        <title>The Chlamydomonas genome reveals the evolution of key animal and plant functions.</title>
        <authorList>
            <person name="Merchant S.S."/>
            <person name="Prochnik S.E."/>
            <person name="Vallon O."/>
            <person name="Harris E.H."/>
            <person name="Karpowicz S.J."/>
            <person name="Witman G.B."/>
            <person name="Terry A."/>
            <person name="Salamov A."/>
            <person name="Fritz-Laylin L.K."/>
            <person name="Marechal-Drouard L."/>
            <person name="Marshall W.F."/>
            <person name="Qu L.H."/>
            <person name="Nelson D.R."/>
            <person name="Sanderfoot A.A."/>
            <person name="Spalding M.H."/>
            <person name="Kapitonov V.V."/>
            <person name="Ren Q."/>
            <person name="Ferris P."/>
            <person name="Lindquist E."/>
            <person name="Shapiro H."/>
            <person name="Lucas S.M."/>
            <person name="Grimwood J."/>
            <person name="Schmutz J."/>
            <person name="Cardol P."/>
            <person name="Cerutti H."/>
            <person name="Chanfreau G."/>
            <person name="Chen C.L."/>
            <person name="Cognat V."/>
            <person name="Croft M.T."/>
            <person name="Dent R."/>
            <person name="Dutcher S."/>
            <person name="Fernandez E."/>
            <person name="Fukuzawa H."/>
            <person name="Gonzalez-Ballester D."/>
            <person name="Gonzalez-Halphen D."/>
            <person name="Hallmann A."/>
            <person name="Hanikenne M."/>
            <person name="Hippler M."/>
            <person name="Inwood W."/>
            <person name="Jabbari K."/>
            <person name="Kalanon M."/>
            <person name="Kuras R."/>
            <person name="Lefebvre P.A."/>
            <person name="Lemaire S.D."/>
            <person name="Lobanov A.V."/>
            <person name="Lohr M."/>
            <person name="Manuell A."/>
            <person name="Meier I."/>
            <person name="Mets L."/>
            <person name="Mittag M."/>
            <person name="Mittelmeier T."/>
            <person name="Moroney J.V."/>
            <person name="Moseley J."/>
            <person name="Napoli C."/>
            <person name="Nedelcu A.M."/>
            <person name="Niyogi K."/>
            <person name="Novoselov S.V."/>
            <person name="Paulsen I.T."/>
            <person name="Pazour G.J."/>
            <person name="Purton S."/>
            <person name="Ral J.P."/>
            <person name="Riano-Pachon D.M."/>
            <person name="Riekhof W."/>
            <person name="Rymarquis L."/>
            <person name="Schroda M."/>
            <person name="Stern D."/>
            <person name="Umen J."/>
            <person name="Willows R."/>
            <person name="Wilson N."/>
            <person name="Zimmer S.L."/>
            <person name="Allmer J."/>
            <person name="Balk J."/>
            <person name="Bisova K."/>
            <person name="Chen C.J."/>
            <person name="Elias M."/>
            <person name="Gendler K."/>
            <person name="Hauser C."/>
            <person name="Lamb M.R."/>
            <person name="Ledford H."/>
            <person name="Long J.C."/>
            <person name="Minagawa J."/>
            <person name="Page M.D."/>
            <person name="Pan J."/>
            <person name="Pootakham W."/>
            <person name="Roje S."/>
            <person name="Rose A."/>
            <person name="Stahlberg E."/>
            <person name="Terauchi A.M."/>
            <person name="Yang P."/>
            <person name="Ball S."/>
            <person name="Bowler C."/>
            <person name="Dieckmann C.L."/>
            <person name="Gladyshev V.N."/>
            <person name="Green P."/>
            <person name="Jorgensen R."/>
            <person name="Mayfield S."/>
            <person name="Mueller-Roeber B."/>
            <person name="Rajamani S."/>
            <person name="Sayre R.T."/>
            <person name="Brokstein P."/>
            <person name="Dubchak I."/>
            <person name="Goodstein D."/>
            <person name="Hornick L."/>
            <person name="Huang Y.W."/>
            <person name="Jhaveri J."/>
            <person name="Luo Y."/>
            <person name="Martinez D."/>
            <person name="Ngau W.C."/>
            <person name="Otillar B."/>
            <person name="Poliakov A."/>
            <person name="Porter A."/>
            <person name="Szajkowski L."/>
            <person name="Werner G."/>
            <person name="Zhou K."/>
            <person name="Grigoriev I.V."/>
            <person name="Rokhsar D.S."/>
            <person name="Grossman A.R."/>
        </authorList>
    </citation>
    <scope>NUCLEOTIDE SEQUENCE [LARGE SCALE GENOMIC DNA]</scope>
    <source>
        <strain>CC-503</strain>
        <strain>cw92</strain>
    </source>
</reference>
<organism>
    <name type="scientific">Chlamydomonas reinhardtii</name>
    <name type="common">Chlamydomonas smithii</name>
    <dbReference type="NCBI Taxonomy" id="3055"/>
    <lineage>
        <taxon>Eukaryota</taxon>
        <taxon>Viridiplantae</taxon>
        <taxon>Chlorophyta</taxon>
        <taxon>core chlorophytes</taxon>
        <taxon>Chlorophyceae</taxon>
        <taxon>CS clade</taxon>
        <taxon>Chlamydomonadales</taxon>
        <taxon>Chlamydomonadaceae</taxon>
        <taxon>Chlamydomonas</taxon>
    </lineage>
</organism>
<name>PLD6_CHLRE</name>
<evidence type="ECO:0000250" key="1"/>
<evidence type="ECO:0000255" key="2"/>
<evidence type="ECO:0000255" key="3">
    <source>
        <dbReference type="PROSITE-ProRule" id="PRU00153"/>
    </source>
</evidence>
<evidence type="ECO:0000305" key="4"/>
<sequence>MGCASSKEEVALTPLSDVNAAKEVADLKAQVDQLKRQLASAGQSAAPAAAGAVKGGVVETLFFPDEKLPCRNNRRPGGCKRQHCEYSHTPTSLSRFLDYLGSATRTLDICVFTITNDDISDVVLELHNKGVRVRIISDNDQAHTQGSDIDKFRQAGIAVRQDKTAAHMHHKFAIIDGRLLLNGSFNWTRQAVTANNENVTVLSDPKLIASFQQQFDKLWDMFK</sequence>
<protein>
    <recommendedName>
        <fullName>Mitochondrial cardiolipin hydrolase</fullName>
        <ecNumber>3.1.-.-</ecNumber>
    </recommendedName>
    <alternativeName>
        <fullName>Phospholipase D6 homolog</fullName>
        <shortName>PLD 6</shortName>
    </alternativeName>
</protein>